<evidence type="ECO:0000255" key="1">
    <source>
        <dbReference type="HAMAP-Rule" id="MF_00123"/>
    </source>
</evidence>
<dbReference type="EC" id="6.1.1.19" evidence="1"/>
<dbReference type="EMBL" id="CP000088">
    <property type="protein sequence ID" value="AAZ54307.1"/>
    <property type="molecule type" value="Genomic_DNA"/>
</dbReference>
<dbReference type="RefSeq" id="WP_011290716.1">
    <property type="nucleotide sequence ID" value="NC_007333.1"/>
</dbReference>
<dbReference type="SMR" id="Q47TB0"/>
<dbReference type="STRING" id="269800.Tfu_0269"/>
<dbReference type="KEGG" id="tfu:Tfu_0269"/>
<dbReference type="eggNOG" id="COG0018">
    <property type="taxonomic scope" value="Bacteria"/>
</dbReference>
<dbReference type="HOGENOM" id="CLU_006406_5_1_11"/>
<dbReference type="OrthoDB" id="9803211at2"/>
<dbReference type="GO" id="GO:0005737">
    <property type="term" value="C:cytoplasm"/>
    <property type="evidence" value="ECO:0007669"/>
    <property type="project" value="UniProtKB-SubCell"/>
</dbReference>
<dbReference type="GO" id="GO:0004814">
    <property type="term" value="F:arginine-tRNA ligase activity"/>
    <property type="evidence" value="ECO:0007669"/>
    <property type="project" value="UniProtKB-UniRule"/>
</dbReference>
<dbReference type="GO" id="GO:0005524">
    <property type="term" value="F:ATP binding"/>
    <property type="evidence" value="ECO:0007669"/>
    <property type="project" value="UniProtKB-UniRule"/>
</dbReference>
<dbReference type="GO" id="GO:0006420">
    <property type="term" value="P:arginyl-tRNA aminoacylation"/>
    <property type="evidence" value="ECO:0007669"/>
    <property type="project" value="UniProtKB-UniRule"/>
</dbReference>
<dbReference type="CDD" id="cd07956">
    <property type="entry name" value="Anticodon_Ia_Arg"/>
    <property type="match status" value="1"/>
</dbReference>
<dbReference type="CDD" id="cd00671">
    <property type="entry name" value="ArgRS_core"/>
    <property type="match status" value="1"/>
</dbReference>
<dbReference type="FunFam" id="1.10.730.10:FF:000008">
    <property type="entry name" value="Arginine--tRNA ligase"/>
    <property type="match status" value="1"/>
</dbReference>
<dbReference type="FunFam" id="3.40.50.620:FF:000116">
    <property type="entry name" value="Arginine--tRNA ligase"/>
    <property type="match status" value="1"/>
</dbReference>
<dbReference type="Gene3D" id="3.30.1360.70">
    <property type="entry name" value="Arginyl tRNA synthetase N-terminal domain"/>
    <property type="match status" value="1"/>
</dbReference>
<dbReference type="Gene3D" id="3.40.50.620">
    <property type="entry name" value="HUPs"/>
    <property type="match status" value="1"/>
</dbReference>
<dbReference type="Gene3D" id="1.10.730.10">
    <property type="entry name" value="Isoleucyl-tRNA Synthetase, Domain 1"/>
    <property type="match status" value="1"/>
</dbReference>
<dbReference type="HAMAP" id="MF_00123">
    <property type="entry name" value="Arg_tRNA_synth"/>
    <property type="match status" value="1"/>
</dbReference>
<dbReference type="InterPro" id="IPR001412">
    <property type="entry name" value="aa-tRNA-synth_I_CS"/>
</dbReference>
<dbReference type="InterPro" id="IPR001278">
    <property type="entry name" value="Arg-tRNA-ligase"/>
</dbReference>
<dbReference type="InterPro" id="IPR005148">
    <property type="entry name" value="Arg-tRNA-synth_N"/>
</dbReference>
<dbReference type="InterPro" id="IPR036695">
    <property type="entry name" value="Arg-tRNA-synth_N_sf"/>
</dbReference>
<dbReference type="InterPro" id="IPR035684">
    <property type="entry name" value="ArgRS_core"/>
</dbReference>
<dbReference type="InterPro" id="IPR008909">
    <property type="entry name" value="DALR_anticod-bd"/>
</dbReference>
<dbReference type="InterPro" id="IPR014729">
    <property type="entry name" value="Rossmann-like_a/b/a_fold"/>
</dbReference>
<dbReference type="InterPro" id="IPR009080">
    <property type="entry name" value="tRNAsynth_Ia_anticodon-bd"/>
</dbReference>
<dbReference type="NCBIfam" id="TIGR00456">
    <property type="entry name" value="argS"/>
    <property type="match status" value="1"/>
</dbReference>
<dbReference type="PANTHER" id="PTHR11956:SF5">
    <property type="entry name" value="ARGININE--TRNA LIGASE, CYTOPLASMIC"/>
    <property type="match status" value="1"/>
</dbReference>
<dbReference type="PANTHER" id="PTHR11956">
    <property type="entry name" value="ARGINYL-TRNA SYNTHETASE"/>
    <property type="match status" value="1"/>
</dbReference>
<dbReference type="Pfam" id="PF03485">
    <property type="entry name" value="Arg_tRNA_synt_N"/>
    <property type="match status" value="1"/>
</dbReference>
<dbReference type="Pfam" id="PF05746">
    <property type="entry name" value="DALR_1"/>
    <property type="match status" value="1"/>
</dbReference>
<dbReference type="Pfam" id="PF00750">
    <property type="entry name" value="tRNA-synt_1d"/>
    <property type="match status" value="1"/>
</dbReference>
<dbReference type="PRINTS" id="PR01038">
    <property type="entry name" value="TRNASYNTHARG"/>
</dbReference>
<dbReference type="SMART" id="SM01016">
    <property type="entry name" value="Arg_tRNA_synt_N"/>
    <property type="match status" value="1"/>
</dbReference>
<dbReference type="SMART" id="SM00836">
    <property type="entry name" value="DALR_1"/>
    <property type="match status" value="1"/>
</dbReference>
<dbReference type="SUPFAM" id="SSF47323">
    <property type="entry name" value="Anticodon-binding domain of a subclass of class I aminoacyl-tRNA synthetases"/>
    <property type="match status" value="1"/>
</dbReference>
<dbReference type="SUPFAM" id="SSF55190">
    <property type="entry name" value="Arginyl-tRNA synthetase (ArgRS), N-terminal 'additional' domain"/>
    <property type="match status" value="1"/>
</dbReference>
<dbReference type="SUPFAM" id="SSF52374">
    <property type="entry name" value="Nucleotidylyl transferase"/>
    <property type="match status" value="1"/>
</dbReference>
<dbReference type="PROSITE" id="PS00178">
    <property type="entry name" value="AA_TRNA_LIGASE_I"/>
    <property type="match status" value="1"/>
</dbReference>
<name>SYR_THEFY</name>
<reference key="1">
    <citation type="journal article" date="2007" name="J. Bacteriol.">
        <title>Genome sequence and analysis of the soil cellulolytic actinomycete Thermobifida fusca YX.</title>
        <authorList>
            <person name="Lykidis A."/>
            <person name="Mavromatis K."/>
            <person name="Ivanova N."/>
            <person name="Anderson I."/>
            <person name="Land M."/>
            <person name="DiBartolo G."/>
            <person name="Martinez M."/>
            <person name="Lapidus A."/>
            <person name="Lucas S."/>
            <person name="Copeland A."/>
            <person name="Richardson P."/>
            <person name="Wilson D.B."/>
            <person name="Kyrpides N."/>
        </authorList>
    </citation>
    <scope>NUCLEOTIDE SEQUENCE [LARGE SCALE GENOMIC DNA]</scope>
    <source>
        <strain>YX</strain>
    </source>
</reference>
<keyword id="KW-0030">Aminoacyl-tRNA synthetase</keyword>
<keyword id="KW-0067">ATP-binding</keyword>
<keyword id="KW-0963">Cytoplasm</keyword>
<keyword id="KW-0436">Ligase</keyword>
<keyword id="KW-0547">Nucleotide-binding</keyword>
<keyword id="KW-0648">Protein biosynthesis</keyword>
<feature type="chain" id="PRO_0000242110" description="Arginine--tRNA ligase">
    <location>
        <begin position="1"/>
        <end position="576"/>
    </location>
</feature>
<feature type="short sequence motif" description="'HIGH' region">
    <location>
        <begin position="122"/>
        <end position="132"/>
    </location>
</feature>
<sequence>MADPQTVLARRVQSALGAAFGPEYRDTDPVIRPSQFADFQANVALALAKRLRRSPRDVATAITEHLDISDVCSKVEISGPGFINLTLRDDWIAHQVHDLLTDERLGTPVQESQNIPIDYSAPNVAKEMHVGHLRTTVVGDALARILEFLGHHVIRQNHIGDWGTPFGMLIEHLLEVGEDSAEAAQLKSDPNAFYQAARAKFDSDEDFADRARRRVVALQSGDAETLRLWRDLIELSKIYFNRIYRKLDVTLTDAHLAGESTYNDMLGPVCDELAEKGLAVVSDGALCVFLEGFTGREGKPVPLIIRKSDGGYGYATTDLATIKYRVEQLKADRIIYVVGAPQSLHLRMVYETARQAGWLGNAEPIHVQIGNVLGSDGKILRTRSGAPVRLMALLDEAVERASAVVAQTRPDLDEETRAAIARDVGIGAVKYADLSIAHDTEYVFDFDRMLALNGNTGPYLQYAVARIRSIFRKGGIDPAQVTGPIQVTEPAERALALKLLDFGATVVQVGDTLEPHRLCTYLFDLAQTFTAFYEACPVLKADRDEVRNSRLALTAVTLHTLVKGLDLLGVRAPEQM</sequence>
<gene>
    <name evidence="1" type="primary">argS</name>
    <name type="ordered locus">Tfu_0269</name>
</gene>
<protein>
    <recommendedName>
        <fullName evidence="1">Arginine--tRNA ligase</fullName>
        <ecNumber evidence="1">6.1.1.19</ecNumber>
    </recommendedName>
    <alternativeName>
        <fullName evidence="1">Arginyl-tRNA synthetase</fullName>
        <shortName evidence="1">ArgRS</shortName>
    </alternativeName>
</protein>
<comment type="catalytic activity">
    <reaction evidence="1">
        <text>tRNA(Arg) + L-arginine + ATP = L-arginyl-tRNA(Arg) + AMP + diphosphate</text>
        <dbReference type="Rhea" id="RHEA:20301"/>
        <dbReference type="Rhea" id="RHEA-COMP:9658"/>
        <dbReference type="Rhea" id="RHEA-COMP:9673"/>
        <dbReference type="ChEBI" id="CHEBI:30616"/>
        <dbReference type="ChEBI" id="CHEBI:32682"/>
        <dbReference type="ChEBI" id="CHEBI:33019"/>
        <dbReference type="ChEBI" id="CHEBI:78442"/>
        <dbReference type="ChEBI" id="CHEBI:78513"/>
        <dbReference type="ChEBI" id="CHEBI:456215"/>
        <dbReference type="EC" id="6.1.1.19"/>
    </reaction>
</comment>
<comment type="subunit">
    <text evidence="1">Monomer.</text>
</comment>
<comment type="subcellular location">
    <subcellularLocation>
        <location evidence="1">Cytoplasm</location>
    </subcellularLocation>
</comment>
<comment type="similarity">
    <text evidence="1">Belongs to the class-I aminoacyl-tRNA synthetase family.</text>
</comment>
<organism>
    <name type="scientific">Thermobifida fusca (strain YX)</name>
    <dbReference type="NCBI Taxonomy" id="269800"/>
    <lineage>
        <taxon>Bacteria</taxon>
        <taxon>Bacillati</taxon>
        <taxon>Actinomycetota</taxon>
        <taxon>Actinomycetes</taxon>
        <taxon>Streptosporangiales</taxon>
        <taxon>Nocardiopsidaceae</taxon>
        <taxon>Thermobifida</taxon>
    </lineage>
</organism>
<accession>Q47TB0</accession>
<proteinExistence type="inferred from homology"/>